<accession>P13188</accession>
<accession>D6W2M6</accession>
<accession>Q12005</accession>
<gene>
    <name type="primary">GLN4</name>
    <name type="ordered locus">YOR168W</name>
    <name type="ORF">O3601</name>
</gene>
<evidence type="ECO:0000250" key="1">
    <source>
        <dbReference type="UniProtKB" id="P00962"/>
    </source>
</evidence>
<evidence type="ECO:0000250" key="2">
    <source>
        <dbReference type="UniProtKB" id="P47897"/>
    </source>
</evidence>
<evidence type="ECO:0000256" key="3">
    <source>
        <dbReference type="SAM" id="MobiDB-lite"/>
    </source>
</evidence>
<evidence type="ECO:0000269" key="4">
    <source>
    </source>
</evidence>
<evidence type="ECO:0000305" key="5"/>
<evidence type="ECO:0007744" key="6">
    <source>
    </source>
</evidence>
<evidence type="ECO:0007829" key="7">
    <source>
        <dbReference type="PDB" id="3TL4"/>
    </source>
</evidence>
<evidence type="ECO:0007829" key="8">
    <source>
        <dbReference type="PDB" id="4H3S"/>
    </source>
</evidence>
<reference key="1">
    <citation type="journal article" date="1987" name="J. Biol. Chem.">
        <title>Gene for yeast glutamine tRNA synthetase encodes a large amino-terminal extension and provides a strong confirmation of the signature sequence for a group of the aminoacyl-tRNA synthetases.</title>
        <authorList>
            <person name="Ludmerer S.W."/>
            <person name="Schimmel P."/>
        </authorList>
    </citation>
    <scope>NUCLEOTIDE SEQUENCE [GENOMIC DNA]</scope>
</reference>
<reference key="2">
    <citation type="journal article" date="1996" name="Yeast">
        <title>Analysis of a 22,956 bp region on the right arm of Saccharomyces cerevisiae chromosome XV.</title>
        <authorList>
            <person name="Madania A."/>
            <person name="Poch O."/>
            <person name="Tarassov I.A."/>
            <person name="Winsor B."/>
            <person name="Martin R.P."/>
        </authorList>
    </citation>
    <scope>NUCLEOTIDE SEQUENCE [GENOMIC DNA]</scope>
    <source>
        <strain>S288c / FY1678</strain>
    </source>
</reference>
<reference key="3">
    <citation type="journal article" date="1997" name="Nature">
        <title>The nucleotide sequence of Saccharomyces cerevisiae chromosome XV.</title>
        <authorList>
            <person name="Dujon B."/>
            <person name="Albermann K."/>
            <person name="Aldea M."/>
            <person name="Alexandraki D."/>
            <person name="Ansorge W."/>
            <person name="Arino J."/>
            <person name="Benes V."/>
            <person name="Bohn C."/>
            <person name="Bolotin-Fukuhara M."/>
            <person name="Bordonne R."/>
            <person name="Boyer J."/>
            <person name="Camasses A."/>
            <person name="Casamayor A."/>
            <person name="Casas C."/>
            <person name="Cheret G."/>
            <person name="Cziepluch C."/>
            <person name="Daignan-Fornier B."/>
            <person name="Dang V.-D."/>
            <person name="de Haan M."/>
            <person name="Delius H."/>
            <person name="Durand P."/>
            <person name="Fairhead C."/>
            <person name="Feldmann H."/>
            <person name="Gaillon L."/>
            <person name="Galisson F."/>
            <person name="Gamo F.-J."/>
            <person name="Gancedo C."/>
            <person name="Goffeau A."/>
            <person name="Goulding S.E."/>
            <person name="Grivell L.A."/>
            <person name="Habbig B."/>
            <person name="Hand N.J."/>
            <person name="Hani J."/>
            <person name="Hattenhorst U."/>
            <person name="Hebling U."/>
            <person name="Hernando Y."/>
            <person name="Herrero E."/>
            <person name="Heumann K."/>
            <person name="Hiesel R."/>
            <person name="Hilger F."/>
            <person name="Hofmann B."/>
            <person name="Hollenberg C.P."/>
            <person name="Hughes B."/>
            <person name="Jauniaux J.-C."/>
            <person name="Kalogeropoulos A."/>
            <person name="Katsoulou C."/>
            <person name="Kordes E."/>
            <person name="Lafuente M.J."/>
            <person name="Landt O."/>
            <person name="Louis E.J."/>
            <person name="Maarse A.C."/>
            <person name="Madania A."/>
            <person name="Mannhaupt G."/>
            <person name="Marck C."/>
            <person name="Martin R.P."/>
            <person name="Mewes H.-W."/>
            <person name="Michaux G."/>
            <person name="Paces V."/>
            <person name="Parle-McDermott A.G."/>
            <person name="Pearson B.M."/>
            <person name="Perrin A."/>
            <person name="Pettersson B."/>
            <person name="Poch O."/>
            <person name="Pohl T.M."/>
            <person name="Poirey R."/>
            <person name="Portetelle D."/>
            <person name="Pujol A."/>
            <person name="Purnelle B."/>
            <person name="Ramezani Rad M."/>
            <person name="Rechmann S."/>
            <person name="Schwager C."/>
            <person name="Schweizer M."/>
            <person name="Sor F."/>
            <person name="Sterky F."/>
            <person name="Tarassov I.A."/>
            <person name="Teodoru C."/>
            <person name="Tettelin H."/>
            <person name="Thierry A."/>
            <person name="Tobiasch E."/>
            <person name="Tzermia M."/>
            <person name="Uhlen M."/>
            <person name="Unseld M."/>
            <person name="Valens M."/>
            <person name="Vandenbol M."/>
            <person name="Vetter I."/>
            <person name="Vlcek C."/>
            <person name="Voet M."/>
            <person name="Volckaert G."/>
            <person name="Voss H."/>
            <person name="Wambutt R."/>
            <person name="Wedler H."/>
            <person name="Wiemann S."/>
            <person name="Winsor B."/>
            <person name="Wolfe K.H."/>
            <person name="Zollner A."/>
            <person name="Zumstein E."/>
            <person name="Kleine K."/>
        </authorList>
    </citation>
    <scope>NUCLEOTIDE SEQUENCE [LARGE SCALE GENOMIC DNA]</scope>
    <source>
        <strain>ATCC 204508 / S288c</strain>
    </source>
</reference>
<reference key="4">
    <citation type="journal article" date="2014" name="G3 (Bethesda)">
        <title>The reference genome sequence of Saccharomyces cerevisiae: Then and now.</title>
        <authorList>
            <person name="Engel S.R."/>
            <person name="Dietrich F.S."/>
            <person name="Fisk D.G."/>
            <person name="Binkley G."/>
            <person name="Balakrishnan R."/>
            <person name="Costanzo M.C."/>
            <person name="Dwight S.S."/>
            <person name="Hitz B.C."/>
            <person name="Karra K."/>
            <person name="Nash R.S."/>
            <person name="Weng S."/>
            <person name="Wong E.D."/>
            <person name="Lloyd P."/>
            <person name="Skrzypek M.S."/>
            <person name="Miyasato S.R."/>
            <person name="Simison M."/>
            <person name="Cherry J.M."/>
        </authorList>
    </citation>
    <scope>GENOME REANNOTATION</scope>
    <source>
        <strain>ATCC 204508 / S288c</strain>
    </source>
</reference>
<reference key="5">
    <citation type="journal article" date="2003" name="Nature">
        <title>Global analysis of protein expression in yeast.</title>
        <authorList>
            <person name="Ghaemmaghami S."/>
            <person name="Huh W.-K."/>
            <person name="Bower K."/>
            <person name="Howson R.W."/>
            <person name="Belle A."/>
            <person name="Dephoure N."/>
            <person name="O'Shea E.K."/>
            <person name="Weissman J.S."/>
        </authorList>
    </citation>
    <scope>LEVEL OF PROTEIN EXPRESSION [LARGE SCALE ANALYSIS]</scope>
</reference>
<reference key="6">
    <citation type="journal article" date="2009" name="Science">
        <title>Global analysis of Cdk1 substrate phosphorylation sites provides insights into evolution.</title>
        <authorList>
            <person name="Holt L.J."/>
            <person name="Tuch B.B."/>
            <person name="Villen J."/>
            <person name="Johnson A.D."/>
            <person name="Gygi S.P."/>
            <person name="Morgan D.O."/>
        </authorList>
    </citation>
    <scope>PHOSPHORYLATION [LARGE SCALE ANALYSIS] AT SER-378</scope>
    <scope>IDENTIFICATION BY MASS SPECTROMETRY [LARGE SCALE ANALYSIS]</scope>
</reference>
<proteinExistence type="evidence at protein level"/>
<feature type="chain" id="PRO_0000195866" description="Glutamine--tRNA ligase">
    <location>
        <begin position="1"/>
        <end position="809"/>
    </location>
</feature>
<feature type="region of interest" description="Disordered" evidence="3">
    <location>
        <begin position="185"/>
        <end position="216"/>
    </location>
</feature>
<feature type="short sequence motif" description="'HIGH' region">
    <location>
        <begin position="258"/>
        <end position="268"/>
    </location>
</feature>
<feature type="short sequence motif" description="'KMSKS' region">
    <location>
        <begin position="495"/>
        <end position="499"/>
    </location>
</feature>
<feature type="compositionally biased region" description="Basic and acidic residues" evidence="3">
    <location>
        <begin position="185"/>
        <end position="198"/>
    </location>
</feature>
<feature type="binding site" evidence="1">
    <location>
        <begin position="259"/>
        <end position="261"/>
    </location>
    <ligand>
        <name>ATP</name>
        <dbReference type="ChEBI" id="CHEBI:30616"/>
    </ligand>
</feature>
<feature type="binding site" evidence="1">
    <location>
        <begin position="265"/>
        <end position="271"/>
    </location>
    <ligand>
        <name>ATP</name>
        <dbReference type="ChEBI" id="CHEBI:30616"/>
    </ligand>
</feature>
<feature type="binding site" evidence="1">
    <location>
        <position position="291"/>
    </location>
    <ligand>
        <name>L-glutamine</name>
        <dbReference type="ChEBI" id="CHEBI:58359"/>
    </ligand>
</feature>
<feature type="binding site" evidence="1">
    <location>
        <position position="440"/>
    </location>
    <ligand>
        <name>L-glutamine</name>
        <dbReference type="ChEBI" id="CHEBI:58359"/>
    </ligand>
</feature>
<feature type="binding site" evidence="1">
    <location>
        <position position="459"/>
    </location>
    <ligand>
        <name>ATP</name>
        <dbReference type="ChEBI" id="CHEBI:30616"/>
    </ligand>
</feature>
<feature type="binding site" evidence="1">
    <location>
        <begin position="488"/>
        <end position="489"/>
    </location>
    <ligand>
        <name>ATP</name>
        <dbReference type="ChEBI" id="CHEBI:30616"/>
    </ligand>
</feature>
<feature type="binding site" evidence="1">
    <location>
        <begin position="496"/>
        <end position="498"/>
    </location>
    <ligand>
        <name>ATP</name>
        <dbReference type="ChEBI" id="CHEBI:30616"/>
    </ligand>
</feature>
<feature type="modified residue" description="Phosphoserine" evidence="6">
    <location>
        <position position="378"/>
    </location>
</feature>
<feature type="sequence conflict" description="In Ref. 1." evidence="5" ref="1">
    <original>G</original>
    <variation>Q</variation>
    <location>
        <position position="179"/>
    </location>
</feature>
<feature type="helix" evidence="7">
    <location>
        <begin position="4"/>
        <end position="13"/>
    </location>
</feature>
<feature type="helix" evidence="7">
    <location>
        <begin position="18"/>
        <end position="24"/>
    </location>
</feature>
<feature type="helix" evidence="7">
    <location>
        <begin position="28"/>
        <end position="39"/>
    </location>
</feature>
<feature type="helix" evidence="7">
    <location>
        <begin position="49"/>
        <end position="62"/>
    </location>
</feature>
<feature type="helix" evidence="7">
    <location>
        <begin position="70"/>
        <end position="78"/>
    </location>
</feature>
<feature type="helix" evidence="7">
    <location>
        <begin position="85"/>
        <end position="98"/>
    </location>
</feature>
<feature type="helix" evidence="7">
    <location>
        <begin position="99"/>
        <end position="101"/>
    </location>
</feature>
<feature type="helix" evidence="7">
    <location>
        <begin position="104"/>
        <end position="109"/>
    </location>
</feature>
<feature type="turn" evidence="7">
    <location>
        <begin position="110"/>
        <end position="114"/>
    </location>
</feature>
<feature type="helix" evidence="7">
    <location>
        <begin position="119"/>
        <end position="132"/>
    </location>
</feature>
<feature type="helix" evidence="7">
    <location>
        <begin position="134"/>
        <end position="140"/>
    </location>
</feature>
<feature type="helix" evidence="7">
    <location>
        <begin position="141"/>
        <end position="144"/>
    </location>
</feature>
<feature type="helix" evidence="7">
    <location>
        <begin position="145"/>
        <end position="153"/>
    </location>
</feature>
<feature type="helix" evidence="7">
    <location>
        <begin position="156"/>
        <end position="158"/>
    </location>
</feature>
<feature type="helix" evidence="7">
    <location>
        <begin position="166"/>
        <end position="178"/>
    </location>
</feature>
<feature type="helix" evidence="7">
    <location>
        <begin position="183"/>
        <end position="185"/>
    </location>
</feature>
<feature type="helix" evidence="8">
    <location>
        <begin position="222"/>
        <end position="225"/>
    </location>
</feature>
<feature type="helix" evidence="8">
    <location>
        <begin position="238"/>
        <end position="240"/>
    </location>
</feature>
<feature type="helix" evidence="8">
    <location>
        <begin position="241"/>
        <end position="248"/>
    </location>
</feature>
<feature type="strand" evidence="8">
    <location>
        <begin position="253"/>
        <end position="256"/>
    </location>
</feature>
<feature type="strand" evidence="8">
    <location>
        <begin position="260"/>
        <end position="262"/>
    </location>
</feature>
<feature type="helix" evidence="8">
    <location>
        <begin position="267"/>
        <end position="281"/>
    </location>
</feature>
<feature type="strand" evidence="8">
    <location>
        <begin position="285"/>
        <end position="290"/>
    </location>
</feature>
<feature type="helix" evidence="8">
    <location>
        <begin position="300"/>
        <end position="312"/>
    </location>
</feature>
<feature type="strand" evidence="8">
    <location>
        <begin position="318"/>
        <end position="322"/>
    </location>
</feature>
<feature type="helix" evidence="8">
    <location>
        <begin position="323"/>
        <end position="326"/>
    </location>
</feature>
<feature type="helix" evidence="8">
    <location>
        <begin position="327"/>
        <end position="339"/>
    </location>
</feature>
<feature type="strand" evidence="8">
    <location>
        <begin position="343"/>
        <end position="346"/>
    </location>
</feature>
<feature type="helix" evidence="8">
    <location>
        <begin position="350"/>
        <end position="356"/>
    </location>
</feature>
<feature type="helix" evidence="8">
    <location>
        <begin position="373"/>
        <end position="376"/>
    </location>
</feature>
<feature type="helix" evidence="8">
    <location>
        <begin position="379"/>
        <end position="390"/>
    </location>
</feature>
<feature type="strand" evidence="8">
    <location>
        <begin position="400"/>
        <end position="403"/>
    </location>
</feature>
<feature type="helix" evidence="8">
    <location>
        <begin position="412"/>
        <end position="414"/>
    </location>
</feature>
<feature type="strand" evidence="8">
    <location>
        <begin position="418"/>
        <end position="422"/>
    </location>
</feature>
<feature type="turn" evidence="8">
    <location>
        <begin position="428"/>
        <end position="430"/>
    </location>
</feature>
<feature type="strand" evidence="8">
    <location>
        <begin position="435"/>
        <end position="438"/>
    </location>
</feature>
<feature type="helix" evidence="8">
    <location>
        <begin position="440"/>
        <end position="450"/>
    </location>
</feature>
<feature type="strand" evidence="8">
    <location>
        <begin position="456"/>
        <end position="459"/>
    </location>
</feature>
<feature type="helix" evidence="8">
    <location>
        <begin position="460"/>
        <end position="465"/>
    </location>
</feature>
<feature type="helix" evidence="8">
    <location>
        <begin position="466"/>
        <end position="475"/>
    </location>
</feature>
<feature type="strand" evidence="8">
    <location>
        <begin position="483"/>
        <end position="486"/>
    </location>
</feature>
<feature type="strand" evidence="8">
    <location>
        <begin position="489"/>
        <end position="494"/>
    </location>
</feature>
<feature type="helix" evidence="8">
    <location>
        <begin position="498"/>
        <end position="506"/>
    </location>
</feature>
<feature type="strand" evidence="8">
    <location>
        <begin position="509"/>
        <end position="512"/>
    </location>
</feature>
<feature type="helix" evidence="8">
    <location>
        <begin position="521"/>
        <end position="527"/>
    </location>
</feature>
<feature type="helix" evidence="8">
    <location>
        <begin position="531"/>
        <end position="541"/>
    </location>
</feature>
<feature type="strand" evidence="8">
    <location>
        <begin position="548"/>
        <end position="551"/>
    </location>
</feature>
<feature type="helix" evidence="8">
    <location>
        <begin position="552"/>
        <end position="566"/>
    </location>
</feature>
<feature type="strand" evidence="8">
    <location>
        <begin position="572"/>
        <end position="581"/>
    </location>
</feature>
<feature type="strand" evidence="8">
    <location>
        <begin position="590"/>
        <end position="597"/>
    </location>
</feature>
<feature type="helix" evidence="8">
    <location>
        <begin position="601"/>
        <end position="603"/>
    </location>
</feature>
<feature type="strand" evidence="8">
    <location>
        <begin position="605"/>
        <end position="610"/>
    </location>
</feature>
<feature type="strand" evidence="8">
    <location>
        <begin position="612"/>
        <end position="617"/>
    </location>
</feature>
<feature type="helix" evidence="8">
    <location>
        <begin position="618"/>
        <end position="620"/>
    </location>
</feature>
<feature type="strand" evidence="8">
    <location>
        <begin position="632"/>
        <end position="634"/>
    </location>
</feature>
<feature type="strand" evidence="8">
    <location>
        <begin position="639"/>
        <end position="641"/>
    </location>
</feature>
<feature type="strand" evidence="8">
    <location>
        <begin position="648"/>
        <end position="655"/>
    </location>
</feature>
<feature type="strand" evidence="8">
    <location>
        <begin position="661"/>
        <end position="668"/>
    </location>
</feature>
<feature type="helix" evidence="8">
    <location>
        <begin position="692"/>
        <end position="694"/>
    </location>
</feature>
<feature type="strand" evidence="8">
    <location>
        <begin position="698"/>
        <end position="706"/>
    </location>
</feature>
<feature type="strand" evidence="8">
    <location>
        <begin position="709"/>
        <end position="713"/>
    </location>
</feature>
<feature type="helix" evidence="8">
    <location>
        <begin position="715"/>
        <end position="717"/>
    </location>
</feature>
<feature type="helix" evidence="8">
    <location>
        <begin position="722"/>
        <end position="725"/>
    </location>
</feature>
<feature type="strand" evidence="8">
    <location>
        <begin position="730"/>
        <end position="739"/>
    </location>
</feature>
<feature type="helix" evidence="8">
    <location>
        <begin position="743"/>
        <end position="748"/>
    </location>
</feature>
<feature type="helix" evidence="8">
    <location>
        <begin position="755"/>
        <end position="758"/>
    </location>
</feature>
<feature type="helix" evidence="8">
    <location>
        <begin position="771"/>
        <end position="773"/>
    </location>
</feature>
<feature type="strand" evidence="8">
    <location>
        <begin position="776"/>
        <end position="778"/>
    </location>
</feature>
<feature type="turn" evidence="8">
    <location>
        <begin position="779"/>
        <end position="781"/>
    </location>
</feature>
<feature type="strand" evidence="8">
    <location>
        <begin position="782"/>
        <end position="786"/>
    </location>
</feature>
<feature type="strand" evidence="8">
    <location>
        <begin position="792"/>
        <end position="794"/>
    </location>
</feature>
<feature type="strand" evidence="8">
    <location>
        <begin position="796"/>
        <end position="801"/>
    </location>
</feature>
<keyword id="KW-0002">3D-structure</keyword>
<keyword id="KW-0030">Aminoacyl-tRNA synthetase</keyword>
<keyword id="KW-0067">ATP-binding</keyword>
<keyword id="KW-0436">Ligase</keyword>
<keyword id="KW-0547">Nucleotide-binding</keyword>
<keyword id="KW-0597">Phosphoprotein</keyword>
<keyword id="KW-0648">Protein biosynthesis</keyword>
<keyword id="KW-1185">Reference proteome</keyword>
<dbReference type="EC" id="6.1.1.18" evidence="2"/>
<dbReference type="EMBL" id="AH001376">
    <property type="protein sequence ID" value="AAA34646.1"/>
    <property type="molecule type" value="Genomic_DNA"/>
</dbReference>
<dbReference type="EMBL" id="U55021">
    <property type="protein sequence ID" value="AAB47415.1"/>
    <property type="molecule type" value="Genomic_DNA"/>
</dbReference>
<dbReference type="EMBL" id="Z75076">
    <property type="protein sequence ID" value="CAA99374.1"/>
    <property type="molecule type" value="Genomic_DNA"/>
</dbReference>
<dbReference type="EMBL" id="BK006948">
    <property type="protein sequence ID" value="DAA10942.1"/>
    <property type="molecule type" value="Genomic_DNA"/>
</dbReference>
<dbReference type="PIR" id="S67056">
    <property type="entry name" value="SYBYQT"/>
</dbReference>
<dbReference type="RefSeq" id="NP_014811.3">
    <property type="nucleotide sequence ID" value="NM_001183587.3"/>
</dbReference>
<dbReference type="PDB" id="3TL4">
    <property type="method" value="X-ray"/>
    <property type="resolution" value="2.30 A"/>
    <property type="chains" value="X=1-187"/>
</dbReference>
<dbReference type="PDB" id="4H3S">
    <property type="method" value="X-ray"/>
    <property type="resolution" value="2.15 A"/>
    <property type="chains" value="A=1-809"/>
</dbReference>
<dbReference type="PDBsum" id="3TL4"/>
<dbReference type="PDBsum" id="4H3S"/>
<dbReference type="SMR" id="P13188"/>
<dbReference type="BioGRID" id="34564">
    <property type="interactions" value="289"/>
</dbReference>
<dbReference type="FunCoup" id="P13188">
    <property type="interactions" value="1534"/>
</dbReference>
<dbReference type="IntAct" id="P13188">
    <property type="interactions" value="23"/>
</dbReference>
<dbReference type="MINT" id="P13188"/>
<dbReference type="STRING" id="4932.YOR168W"/>
<dbReference type="iPTMnet" id="P13188"/>
<dbReference type="PaxDb" id="4932-YOR168W"/>
<dbReference type="PeptideAtlas" id="P13188"/>
<dbReference type="EnsemblFungi" id="YOR168W_mRNA">
    <property type="protein sequence ID" value="YOR168W"/>
    <property type="gene ID" value="YOR168W"/>
</dbReference>
<dbReference type="GeneID" id="854339"/>
<dbReference type="KEGG" id="sce:YOR168W"/>
<dbReference type="AGR" id="SGD:S000005694"/>
<dbReference type="SGD" id="S000005694">
    <property type="gene designation" value="GLN4"/>
</dbReference>
<dbReference type="VEuPathDB" id="FungiDB:YOR168W"/>
<dbReference type="eggNOG" id="KOG1148">
    <property type="taxonomic scope" value="Eukaryota"/>
</dbReference>
<dbReference type="GeneTree" id="ENSGT00940000168831"/>
<dbReference type="HOGENOM" id="CLU_001882_2_3_1"/>
<dbReference type="InParanoid" id="P13188"/>
<dbReference type="OMA" id="TWCIYPM"/>
<dbReference type="OrthoDB" id="10250478at2759"/>
<dbReference type="BioCyc" id="YEAST:G3O-33684-MONOMER"/>
<dbReference type="BRENDA" id="6.1.1.18">
    <property type="organism ID" value="984"/>
</dbReference>
<dbReference type="BRENDA" id="6.3.5.7">
    <property type="organism ID" value="984"/>
</dbReference>
<dbReference type="BioGRID-ORCS" id="854339">
    <property type="hits" value="1 hit in 10 CRISPR screens"/>
</dbReference>
<dbReference type="CD-CODE" id="E03F929F">
    <property type="entry name" value="Stress granule"/>
</dbReference>
<dbReference type="EvolutionaryTrace" id="P13188"/>
<dbReference type="PRO" id="PR:P13188"/>
<dbReference type="Proteomes" id="UP000002311">
    <property type="component" value="Chromosome XV"/>
</dbReference>
<dbReference type="RNAct" id="P13188">
    <property type="molecule type" value="protein"/>
</dbReference>
<dbReference type="GO" id="GO:0005829">
    <property type="term" value="C:cytosol"/>
    <property type="evidence" value="ECO:0000314"/>
    <property type="project" value="SGD"/>
</dbReference>
<dbReference type="GO" id="GO:0005739">
    <property type="term" value="C:mitochondrion"/>
    <property type="evidence" value="ECO:0000314"/>
    <property type="project" value="SGD"/>
</dbReference>
<dbReference type="GO" id="GO:0005524">
    <property type="term" value="F:ATP binding"/>
    <property type="evidence" value="ECO:0007669"/>
    <property type="project" value="UniProtKB-KW"/>
</dbReference>
<dbReference type="GO" id="GO:0004819">
    <property type="term" value="F:glutamine-tRNA ligase activity"/>
    <property type="evidence" value="ECO:0000314"/>
    <property type="project" value="SGD"/>
</dbReference>
<dbReference type="GO" id="GO:0003729">
    <property type="term" value="F:mRNA binding"/>
    <property type="evidence" value="ECO:0007005"/>
    <property type="project" value="SGD"/>
</dbReference>
<dbReference type="GO" id="GO:1990825">
    <property type="term" value="F:sequence-specific mRNA binding"/>
    <property type="evidence" value="ECO:0000314"/>
    <property type="project" value="SGD"/>
</dbReference>
<dbReference type="GO" id="GO:0006425">
    <property type="term" value="P:glutaminyl-tRNA aminoacylation"/>
    <property type="evidence" value="ECO:0000315"/>
    <property type="project" value="SGD"/>
</dbReference>
<dbReference type="CDD" id="cd00807">
    <property type="entry name" value="GlnRS_core"/>
    <property type="match status" value="1"/>
</dbReference>
<dbReference type="FunFam" id="1.10.1160.10:FF:000001">
    <property type="entry name" value="Glutamine--tRNA ligase"/>
    <property type="match status" value="1"/>
</dbReference>
<dbReference type="FunFam" id="1.10.8.1290:FF:000003">
    <property type="entry name" value="Glutamine--tRNA ligase"/>
    <property type="match status" value="1"/>
</dbReference>
<dbReference type="FunFam" id="2.40.240.10:FF:000007">
    <property type="entry name" value="Glutamine--tRNA ligase"/>
    <property type="match status" value="1"/>
</dbReference>
<dbReference type="FunFam" id="3.90.800.10:FF:000001">
    <property type="entry name" value="Glutamine--tRNA ligase"/>
    <property type="match status" value="1"/>
</dbReference>
<dbReference type="FunFam" id="1.10.10.2420:FF:000001">
    <property type="entry name" value="Glutamine--tRNA ligase cytoplasmic"/>
    <property type="match status" value="1"/>
</dbReference>
<dbReference type="FunFam" id="2.40.240.10:FF:000015">
    <property type="entry name" value="Glutaminyl-tRNA synthetase"/>
    <property type="match status" value="1"/>
</dbReference>
<dbReference type="FunFam" id="3.40.50.620:FF:000183">
    <property type="entry name" value="Glutaminyl-tRNA synthetase"/>
    <property type="match status" value="1"/>
</dbReference>
<dbReference type="Gene3D" id="1.10.10.2420">
    <property type="match status" value="1"/>
</dbReference>
<dbReference type="Gene3D" id="1.10.8.1290">
    <property type="entry name" value="Glutaminyl-tRNA synthetase, non-specific RNA binding region part 1, domain 1"/>
    <property type="match status" value="1"/>
</dbReference>
<dbReference type="Gene3D" id="3.40.50.620">
    <property type="entry name" value="HUPs"/>
    <property type="match status" value="1"/>
</dbReference>
<dbReference type="Gene3D" id="2.40.240.10">
    <property type="entry name" value="Ribosomal Protein L25, Chain P"/>
    <property type="match status" value="2"/>
</dbReference>
<dbReference type="InterPro" id="IPR001412">
    <property type="entry name" value="aa-tRNA-synth_I_CS"/>
</dbReference>
<dbReference type="InterPro" id="IPR004514">
    <property type="entry name" value="Gln-tRNA-synth"/>
</dbReference>
<dbReference type="InterPro" id="IPR007638">
    <property type="entry name" value="Gln-tRNA-synth_Ib_RNA-bd_2"/>
</dbReference>
<dbReference type="InterPro" id="IPR007639">
    <property type="entry name" value="Gln-tRNA-synth_Ib_RNA-bd_N"/>
</dbReference>
<dbReference type="InterPro" id="IPR042558">
    <property type="entry name" value="Gln-tRNA-synth_Ib_RNA-bd_N_1"/>
</dbReference>
<dbReference type="InterPro" id="IPR042559">
    <property type="entry name" value="Gln-tRNA-synth_Ib_RNA-bd_N_2"/>
</dbReference>
<dbReference type="InterPro" id="IPR050132">
    <property type="entry name" value="Gln/Glu-tRNA_Ligase"/>
</dbReference>
<dbReference type="InterPro" id="IPR000924">
    <property type="entry name" value="Glu/Gln-tRNA-synth"/>
</dbReference>
<dbReference type="InterPro" id="IPR020058">
    <property type="entry name" value="Glu/Gln-tRNA-synth_Ib_cat-dom"/>
</dbReference>
<dbReference type="InterPro" id="IPR020059">
    <property type="entry name" value="Glu/Gln-tRNA-synth_Ib_codon-bd"/>
</dbReference>
<dbReference type="InterPro" id="IPR020056">
    <property type="entry name" value="Rbsml_bL25/Gln-tRNA_synth_N"/>
</dbReference>
<dbReference type="InterPro" id="IPR011035">
    <property type="entry name" value="Ribosomal_bL25/Gln-tRNA_synth"/>
</dbReference>
<dbReference type="InterPro" id="IPR014729">
    <property type="entry name" value="Rossmann-like_a/b/a_fold"/>
</dbReference>
<dbReference type="InterPro" id="IPR049437">
    <property type="entry name" value="tRNA-synt_1c_C2"/>
</dbReference>
<dbReference type="NCBIfam" id="TIGR00440">
    <property type="entry name" value="glnS"/>
    <property type="match status" value="1"/>
</dbReference>
<dbReference type="PANTHER" id="PTHR43097:SF4">
    <property type="entry name" value="GLUTAMINE--TRNA LIGASE"/>
    <property type="match status" value="1"/>
</dbReference>
<dbReference type="PANTHER" id="PTHR43097">
    <property type="entry name" value="GLUTAMINE-TRNA LIGASE"/>
    <property type="match status" value="1"/>
</dbReference>
<dbReference type="Pfam" id="PF00749">
    <property type="entry name" value="tRNA-synt_1c"/>
    <property type="match status" value="1"/>
</dbReference>
<dbReference type="Pfam" id="PF03950">
    <property type="entry name" value="tRNA-synt_1c_C"/>
    <property type="match status" value="1"/>
</dbReference>
<dbReference type="Pfam" id="PF20974">
    <property type="entry name" value="tRNA-synt_1c_C2"/>
    <property type="match status" value="1"/>
</dbReference>
<dbReference type="Pfam" id="PF04558">
    <property type="entry name" value="tRNA_synt_1c_R1"/>
    <property type="match status" value="1"/>
</dbReference>
<dbReference type="Pfam" id="PF04557">
    <property type="entry name" value="tRNA_synt_1c_R2"/>
    <property type="match status" value="1"/>
</dbReference>
<dbReference type="PRINTS" id="PR00987">
    <property type="entry name" value="TRNASYNTHGLU"/>
</dbReference>
<dbReference type="SUPFAM" id="SSF52374">
    <property type="entry name" value="Nucleotidylyl transferase"/>
    <property type="match status" value="1"/>
</dbReference>
<dbReference type="SUPFAM" id="SSF50715">
    <property type="entry name" value="Ribosomal protein L25-like"/>
    <property type="match status" value="1"/>
</dbReference>
<dbReference type="PROSITE" id="PS00178">
    <property type="entry name" value="AA_TRNA_LIGASE_I"/>
    <property type="match status" value="1"/>
</dbReference>
<protein>
    <recommendedName>
        <fullName>Glutamine--tRNA ligase</fullName>
        <ecNumber evidence="2">6.1.1.18</ecNumber>
    </recommendedName>
    <alternativeName>
        <fullName>Glutaminyl-tRNA synthetase</fullName>
        <shortName>GlnRS</shortName>
    </alternativeName>
</protein>
<organism>
    <name type="scientific">Saccharomyces cerevisiae (strain ATCC 204508 / S288c)</name>
    <name type="common">Baker's yeast</name>
    <dbReference type="NCBI Taxonomy" id="559292"/>
    <lineage>
        <taxon>Eukaryota</taxon>
        <taxon>Fungi</taxon>
        <taxon>Dikarya</taxon>
        <taxon>Ascomycota</taxon>
        <taxon>Saccharomycotina</taxon>
        <taxon>Saccharomycetes</taxon>
        <taxon>Saccharomycetales</taxon>
        <taxon>Saccharomycetaceae</taxon>
        <taxon>Saccharomyces</taxon>
    </lineage>
</organism>
<comment type="catalytic activity">
    <reaction evidence="2">
        <text>tRNA(Gln) + L-glutamine + ATP = L-glutaminyl-tRNA(Gln) + AMP + diphosphate</text>
        <dbReference type="Rhea" id="RHEA:20121"/>
        <dbReference type="Rhea" id="RHEA-COMP:9662"/>
        <dbReference type="Rhea" id="RHEA-COMP:9681"/>
        <dbReference type="ChEBI" id="CHEBI:30616"/>
        <dbReference type="ChEBI" id="CHEBI:33019"/>
        <dbReference type="ChEBI" id="CHEBI:58359"/>
        <dbReference type="ChEBI" id="CHEBI:78442"/>
        <dbReference type="ChEBI" id="CHEBI:78521"/>
        <dbReference type="ChEBI" id="CHEBI:456215"/>
        <dbReference type="EC" id="6.1.1.18"/>
    </reaction>
</comment>
<comment type="miscellaneous">
    <text evidence="4">Present with 37500 molecules/cell in log phase SD medium.</text>
</comment>
<comment type="similarity">
    <text evidence="5">Belongs to the class-I aminoacyl-tRNA synthetase family.</text>
</comment>
<name>SYQ_YEAST</name>
<sequence>MSSVEELTQLFSQVGFEDKKVKEIVKNKKVSDSLYKLIKETPSDYQWNKSTRALVHNLASFVKGTDLPKSELIVNGIINGDLKTSLQVDAAFKYVKANGEASTKMGMNENSGVGIEITEDQVRNYVMQYIQENKERILTERYKLVPGIFADVKNLKELKWADPRSFKPIIDQEVLKLLGPKDERDLIKKKTKNNEKKKTNSAKKSSDNSASSGPKRTMFNEGFLGDLHKVGENPQAYPELMKEHLEVTGGKVRTRFPPEPNGYLHIGHSKAIMVNFGYAKYHNGTCYLRFDDTNPEKEAPEYFESIKRMVSWLGFKPWKITYSSDYFDELYRLAEVLIKNGKAYVCHCTAEEIKRGRGIKEDGTPGGERYACKHRDQSIEQNLQEFRDMRDGKYKPGEAILRMKQDLNSPSPQMWDLIAYRVLNAPHPRTGTKWRIYPTYDFTHCLVDSMENITHSLCTTEFYLSRESYEWLCDQVHVFRPAQREYGRLNITGTVLSKRKIAQLVDEKFVRGWDDPRLFTLEAIRRRGVPPGAILSFINTLGVTTSTTNIQVVRFESAVRKYLEDTTPRLMFVLDPVEVVVDNLSDDYEELATIPYRPGTPEFGERTVPFTNKFYIERSDFSENVDDKEFFRLTPNQPVGLIKVSHTVSFKSLEKDEAGKIIRIHVNYDNKVEEGSKPKKPKTYIQWVPISSKYNSPLRVTETRVYNQLFKSENPSSHPEGFLKDINPESEVVYKESVMEHNFGDVVKNSPWVVDSVKNSEFYVEEDKDSKEVCRFQAMRVGYFTLDKESTTSKVILNRIVSLKDATSK</sequence>